<dbReference type="EC" id="1.3.7.7" evidence="1"/>
<dbReference type="EMBL" id="AB086179">
    <property type="protein sequence ID" value="BAC55338.1"/>
    <property type="molecule type" value="Genomic_DNA"/>
</dbReference>
<dbReference type="EMBL" id="AB087430">
    <property type="protein sequence ID" value="BAC55429.1"/>
    <property type="molecule type" value="mRNA"/>
</dbReference>
<dbReference type="RefSeq" id="NP_777402.1">
    <property type="nucleotide sequence ID" value="NC_004543.1"/>
</dbReference>
<dbReference type="SMR" id="Q85AC2"/>
<dbReference type="GeneID" id="2553487"/>
<dbReference type="UniPathway" id="UPA00670"/>
<dbReference type="GO" id="GO:0009507">
    <property type="term" value="C:chloroplast"/>
    <property type="evidence" value="ECO:0007669"/>
    <property type="project" value="UniProtKB-SubCell"/>
</dbReference>
<dbReference type="GO" id="GO:0051539">
    <property type="term" value="F:4 iron, 4 sulfur cluster binding"/>
    <property type="evidence" value="ECO:0007669"/>
    <property type="project" value="UniProtKB-UniRule"/>
</dbReference>
<dbReference type="GO" id="GO:0005524">
    <property type="term" value="F:ATP binding"/>
    <property type="evidence" value="ECO:0007669"/>
    <property type="project" value="UniProtKB-UniRule"/>
</dbReference>
<dbReference type="GO" id="GO:0046872">
    <property type="term" value="F:metal ion binding"/>
    <property type="evidence" value="ECO:0007669"/>
    <property type="project" value="UniProtKB-KW"/>
</dbReference>
<dbReference type="GO" id="GO:0016730">
    <property type="term" value="F:oxidoreductase activity, acting on iron-sulfur proteins as donors"/>
    <property type="evidence" value="ECO:0007669"/>
    <property type="project" value="InterPro"/>
</dbReference>
<dbReference type="GO" id="GO:0016636">
    <property type="term" value="F:oxidoreductase activity, acting on the CH-CH group of donors, iron-sulfur protein as acceptor"/>
    <property type="evidence" value="ECO:0007669"/>
    <property type="project" value="UniProtKB-UniRule"/>
</dbReference>
<dbReference type="GO" id="GO:0036068">
    <property type="term" value="P:light-independent chlorophyll biosynthetic process"/>
    <property type="evidence" value="ECO:0007669"/>
    <property type="project" value="UniProtKB-UniRule"/>
</dbReference>
<dbReference type="GO" id="GO:0019685">
    <property type="term" value="P:photosynthesis, dark reaction"/>
    <property type="evidence" value="ECO:0007669"/>
    <property type="project" value="InterPro"/>
</dbReference>
<dbReference type="CDD" id="cd01981">
    <property type="entry name" value="Pchlide_reductase_B"/>
    <property type="match status" value="1"/>
</dbReference>
<dbReference type="Gene3D" id="1.20.89.20">
    <property type="match status" value="1"/>
</dbReference>
<dbReference type="Gene3D" id="3.40.50.1980">
    <property type="entry name" value="Nitrogenase molybdenum iron protein domain"/>
    <property type="match status" value="3"/>
</dbReference>
<dbReference type="Gene3D" id="1.10.8.550">
    <property type="entry name" value="Proto-chlorophyllide reductase 57 kD subunit B"/>
    <property type="match status" value="1"/>
</dbReference>
<dbReference type="HAMAP" id="MF_00353">
    <property type="entry name" value="ChlB_BchB"/>
    <property type="match status" value="1"/>
</dbReference>
<dbReference type="InterPro" id="IPR050152">
    <property type="entry name" value="ChlB/BchB/BchZ"/>
</dbReference>
<dbReference type="InterPro" id="IPR013580">
    <property type="entry name" value="LI-POR_suB-like_C"/>
</dbReference>
<dbReference type="InterPro" id="IPR000510">
    <property type="entry name" value="Nase/OxRdtase_comp1"/>
</dbReference>
<dbReference type="InterPro" id="IPR042298">
    <property type="entry name" value="P-CP_red_C"/>
</dbReference>
<dbReference type="InterPro" id="IPR005969">
    <property type="entry name" value="Protochl_reductB"/>
</dbReference>
<dbReference type="InterPro" id="IPR016209">
    <property type="entry name" value="Protochlorophyllide_Rdtase"/>
</dbReference>
<dbReference type="NCBIfam" id="TIGR01278">
    <property type="entry name" value="DPOR_BchB"/>
    <property type="match status" value="1"/>
</dbReference>
<dbReference type="PANTHER" id="PTHR33712">
    <property type="entry name" value="LIGHT-INDEPENDENT PROTOCHLOROPHYLLIDE REDUCTASE SUBUNIT B"/>
    <property type="match status" value="1"/>
</dbReference>
<dbReference type="PANTHER" id="PTHR33712:SF7">
    <property type="entry name" value="LIGHT-INDEPENDENT PROTOCHLOROPHYLLIDE REDUCTASE SUBUNIT B"/>
    <property type="match status" value="1"/>
</dbReference>
<dbReference type="Pfam" id="PF00148">
    <property type="entry name" value="Oxidored_nitro"/>
    <property type="match status" value="1"/>
</dbReference>
<dbReference type="Pfam" id="PF08369">
    <property type="entry name" value="PCP_red"/>
    <property type="match status" value="1"/>
</dbReference>
<dbReference type="PIRSF" id="PIRSF000163">
    <property type="entry name" value="PCP_ChlB"/>
    <property type="match status" value="1"/>
</dbReference>
<dbReference type="SUPFAM" id="SSF53807">
    <property type="entry name" value="Helical backbone' metal receptor"/>
    <property type="match status" value="1"/>
</dbReference>
<proteinExistence type="evidence at transcript level"/>
<keyword id="KW-0004">4Fe-4S</keyword>
<keyword id="KW-0067">ATP-binding</keyword>
<keyword id="KW-0149">Chlorophyll biosynthesis</keyword>
<keyword id="KW-0150">Chloroplast</keyword>
<keyword id="KW-0408">Iron</keyword>
<keyword id="KW-0411">Iron-sulfur</keyword>
<keyword id="KW-0479">Metal-binding</keyword>
<keyword id="KW-0547">Nucleotide-binding</keyword>
<keyword id="KW-0560">Oxidoreductase</keyword>
<keyword id="KW-0602">Photosynthesis</keyword>
<keyword id="KW-0934">Plastid</keyword>
<keyword id="KW-0691">RNA editing</keyword>
<geneLocation type="chloroplast"/>
<feature type="chain" id="PRO_0000219809" description="Light-independent protochlorophyllide reductase subunit B">
    <location>
        <begin position="1"/>
        <end position="513"/>
    </location>
</feature>
<feature type="active site" description="Proton donor" evidence="1">
    <location>
        <position position="299"/>
    </location>
</feature>
<feature type="binding site" evidence="1">
    <location>
        <position position="36"/>
    </location>
    <ligand>
        <name>[4Fe-4S] cluster</name>
        <dbReference type="ChEBI" id="CHEBI:49883"/>
        <note>ligand shared with heterodimeric partner</note>
    </ligand>
</feature>
<feature type="binding site" evidence="1">
    <location>
        <begin position="434"/>
        <end position="435"/>
    </location>
    <ligand>
        <name>substrate</name>
    </ligand>
</feature>
<name>CHLB_ANTAG</name>
<protein>
    <recommendedName>
        <fullName evidence="1">Light-independent protochlorophyllide reductase subunit B</fullName>
        <shortName evidence="1">DPOR subunit B</shortName>
        <shortName evidence="1">LI-POR subunit B</shortName>
        <ecNumber evidence="1">1.3.7.7</ecNumber>
    </recommendedName>
</protein>
<gene>
    <name evidence="1" type="primary">chlB</name>
</gene>
<evidence type="ECO:0000255" key="1">
    <source>
        <dbReference type="HAMAP-Rule" id="MF_00353"/>
    </source>
</evidence>
<evidence type="ECO:0000269" key="2">
    <source>
    </source>
</evidence>
<evidence type="ECO:0000269" key="3">
    <source>
    </source>
</evidence>
<comment type="function">
    <text evidence="1">Component of the dark-operative protochlorophyllide reductase (DPOR) that uses Mg-ATP and reduced ferredoxin to reduce ring D of protochlorophyllide (Pchlide) to form chlorophyllide a (Chlide). This reaction is light-independent. The NB-protein (ChlN-ChlB) is the catalytic component of the complex.</text>
</comment>
<comment type="catalytic activity">
    <reaction evidence="1">
        <text>chlorophyllide a + oxidized 2[4Fe-4S]-[ferredoxin] + 2 ADP + 2 phosphate = protochlorophyllide a + reduced 2[4Fe-4S]-[ferredoxin] + 2 ATP + 2 H2O</text>
        <dbReference type="Rhea" id="RHEA:28202"/>
        <dbReference type="Rhea" id="RHEA-COMP:10002"/>
        <dbReference type="Rhea" id="RHEA-COMP:10004"/>
        <dbReference type="ChEBI" id="CHEBI:15377"/>
        <dbReference type="ChEBI" id="CHEBI:30616"/>
        <dbReference type="ChEBI" id="CHEBI:33722"/>
        <dbReference type="ChEBI" id="CHEBI:33723"/>
        <dbReference type="ChEBI" id="CHEBI:43474"/>
        <dbReference type="ChEBI" id="CHEBI:83348"/>
        <dbReference type="ChEBI" id="CHEBI:83350"/>
        <dbReference type="ChEBI" id="CHEBI:456216"/>
        <dbReference type="EC" id="1.3.7.7"/>
    </reaction>
</comment>
<comment type="cofactor">
    <cofactor evidence="1">
        <name>[4Fe-4S] cluster</name>
        <dbReference type="ChEBI" id="CHEBI:49883"/>
    </cofactor>
    <text evidence="1">Binds 1 [4Fe-4S] cluster per heterodimer. The cluster is bound at the heterodimer interface by residues from both subunits.</text>
</comment>
<comment type="pathway">
    <text evidence="1">Porphyrin-containing compound metabolism; chlorophyll biosynthesis (light-independent).</text>
</comment>
<comment type="subunit">
    <text evidence="1">Protochlorophyllide reductase is composed of three subunits; ChlL, ChlN and ChlB. Forms a heterotetramer of two ChlB and two ChlN subunits.</text>
</comment>
<comment type="subcellular location">
    <subcellularLocation>
        <location>Plastid</location>
        <location>Chloroplast</location>
    </subcellularLocation>
</comment>
<comment type="RNA editing">
    <location>
        <position position="31" evidence="2 3"/>
    </location>
    <location>
        <position position="33" evidence="2 3"/>
    </location>
    <location>
        <position position="54" evidence="2 3"/>
    </location>
    <location>
        <position position="91" evidence="2 3"/>
    </location>
    <location>
        <position position="93" evidence="2 3"/>
    </location>
    <location>
        <position position="100" evidence="2 3"/>
    </location>
    <location>
        <position position="104" evidence="2 3"/>
    </location>
    <location>
        <position position="121" evidence="2 3"/>
    </location>
    <location>
        <position position="127" evidence="2 3"/>
    </location>
    <location>
        <position position="128" evidence="2 3"/>
    </location>
    <location>
        <position position="133" evidence="2 3"/>
    </location>
    <location>
        <position position="135" evidence="2 3"/>
    </location>
    <location>
        <position position="137" evidence="2 3"/>
    </location>
    <location>
        <position position="141" evidence="2 3"/>
    </location>
    <location>
        <position position="172" evidence="2 3"/>
    </location>
    <location>
        <position position="219" evidence="2 3"/>
    </location>
    <location>
        <position position="246" evidence="2 3"/>
    </location>
    <location>
        <position position="257" evidence="2 3"/>
    </location>
    <location>
        <position position="283" evidence="2 3"/>
    </location>
    <location>
        <position position="284" evidence="2 3"/>
    </location>
    <location>
        <position position="291" evidence="2 3"/>
    </location>
    <location>
        <position position="378" evidence="2 3"/>
    </location>
    <location>
        <position position="401" evidence="2 3"/>
    </location>
    <location>
        <position position="407" evidence="2 3"/>
    </location>
    <location>
        <position position="472" evidence="2 3"/>
    </location>
    <text>The nonsense codons at positions 128, 133, 137, 141, 257, 283 and 284 are modified to sense codons.</text>
</comment>
<comment type="similarity">
    <text evidence="1">Belongs to the ChlB/BchB/BchZ family.</text>
</comment>
<sequence>MKLAYWMYAGPAHIGTLRVASSFKNVHAIMHAPLGDDYFNVMRSMLERERDFTPVTASIVDRHVLARGSQEKVVDNIMRKDKEECPDLIVLTPTCTSSILQEDLQNFVDRASISVNSDVILADVNHYRVNELQAADRTLEQIVRYYLDKARRQGKLNQSITDVPSANIIGIFTLGFHNQHDCRELKRLLKDLGIKINQVIPEGGFVEDLEKLPKAWFNLIPYREVGLMTAIYLEKEFGMPYVSITPMGIADIVQCIRQIQKRVNTWTHFLLNQKLDYELYIDQQTRFISQAAWFSRSIDCQNLTGKKAVVFGDATHASSMTKILAQEMGIRVSCAGTYCKHDAEWFEEQVQGFCDEILITDDHTQVGDTIARIEPSAIFGTQMERHIGKRLDIPCGVISSPVHIQNFPLGYRPFLGYEGTNQIADLVYNSFTLGMEDHLLEIFGGHDTKEVITKSLSTDNDLTWNSESQLELNKIPGFVRGKIKRNTERFARQNGITGITVEVMYAAKEALNA</sequence>
<organism>
    <name type="scientific">Anthoceros angustus</name>
    <name type="common">Hornwort</name>
    <name type="synonym">Anthoceros formosae</name>
    <dbReference type="NCBI Taxonomy" id="48387"/>
    <lineage>
        <taxon>Eukaryota</taxon>
        <taxon>Viridiplantae</taxon>
        <taxon>Streptophyta</taxon>
        <taxon>Embryophyta</taxon>
        <taxon>Anthocerotophyta</taxon>
        <taxon>Anthocerotopsida</taxon>
        <taxon>Anthocerotidae</taxon>
        <taxon>Anthocerotales</taxon>
        <taxon>Anthocerotaceae</taxon>
        <taxon>Anthoceros</taxon>
    </lineage>
</organism>
<accession>Q85AC2</accession>
<reference key="1">
    <citation type="journal article" date="2003" name="Nucleic Acids Res.">
        <title>The complete nucleotide sequence of the hornwort (Anthoceros formosae) chloroplast genome: insight into the earliest land plants.</title>
        <authorList>
            <person name="Kugita M."/>
            <person name="Kaneko A."/>
            <person name="Yamamoto Y."/>
            <person name="Takeya Y."/>
            <person name="Matsumoto T."/>
            <person name="Yoshinaga K."/>
        </authorList>
    </citation>
    <scope>NUCLEOTIDE SEQUENCE [LARGE SCALE GENOMIC DNA]</scope>
    <scope>RNA EDITING</scope>
</reference>
<reference key="2">
    <citation type="journal article" date="2003" name="Nucleic Acids Res.">
        <title>RNA editing in hornwort chloroplasts makes more than half the genes functional.</title>
        <authorList>
            <person name="Kugita M."/>
            <person name="Yamamoto Y."/>
            <person name="Fujikawa T."/>
            <person name="Matsumoto T."/>
            <person name="Yoshinaga K."/>
        </authorList>
    </citation>
    <scope>NUCLEOTIDE SEQUENCE [MRNA]</scope>
    <scope>RNA EDITING</scope>
    <source>
        <tissue>Thallus</tissue>
    </source>
</reference>